<keyword id="KW-0687">Ribonucleoprotein</keyword>
<keyword id="KW-0689">Ribosomal protein</keyword>
<keyword id="KW-0694">RNA-binding</keyword>
<keyword id="KW-0699">rRNA-binding</keyword>
<accession>Q68W87</accession>
<dbReference type="EMBL" id="AE017197">
    <property type="protein sequence ID" value="AAU04105.1"/>
    <property type="molecule type" value="Genomic_DNA"/>
</dbReference>
<dbReference type="SMR" id="Q68W87"/>
<dbReference type="KEGG" id="rty:RT0642"/>
<dbReference type="eggNOG" id="COG0186">
    <property type="taxonomic scope" value="Bacteria"/>
</dbReference>
<dbReference type="HOGENOM" id="CLU_073626_1_1_5"/>
<dbReference type="Proteomes" id="UP000000604">
    <property type="component" value="Chromosome"/>
</dbReference>
<dbReference type="GO" id="GO:0022627">
    <property type="term" value="C:cytosolic small ribosomal subunit"/>
    <property type="evidence" value="ECO:0007669"/>
    <property type="project" value="TreeGrafter"/>
</dbReference>
<dbReference type="GO" id="GO:0019843">
    <property type="term" value="F:rRNA binding"/>
    <property type="evidence" value="ECO:0007669"/>
    <property type="project" value="UniProtKB-UniRule"/>
</dbReference>
<dbReference type="GO" id="GO:0003735">
    <property type="term" value="F:structural constituent of ribosome"/>
    <property type="evidence" value="ECO:0007669"/>
    <property type="project" value="InterPro"/>
</dbReference>
<dbReference type="GO" id="GO:0006412">
    <property type="term" value="P:translation"/>
    <property type="evidence" value="ECO:0007669"/>
    <property type="project" value="UniProtKB-UniRule"/>
</dbReference>
<dbReference type="CDD" id="cd00364">
    <property type="entry name" value="Ribosomal_uS17"/>
    <property type="match status" value="1"/>
</dbReference>
<dbReference type="Gene3D" id="2.40.50.140">
    <property type="entry name" value="Nucleic acid-binding proteins"/>
    <property type="match status" value="1"/>
</dbReference>
<dbReference type="HAMAP" id="MF_01345_B">
    <property type="entry name" value="Ribosomal_uS17_B"/>
    <property type="match status" value="1"/>
</dbReference>
<dbReference type="InterPro" id="IPR012340">
    <property type="entry name" value="NA-bd_OB-fold"/>
</dbReference>
<dbReference type="InterPro" id="IPR000266">
    <property type="entry name" value="Ribosomal_uS17"/>
</dbReference>
<dbReference type="InterPro" id="IPR019984">
    <property type="entry name" value="Ribosomal_uS17_bact/chlr"/>
</dbReference>
<dbReference type="InterPro" id="IPR019979">
    <property type="entry name" value="Ribosomal_uS17_CS"/>
</dbReference>
<dbReference type="NCBIfam" id="NF004123">
    <property type="entry name" value="PRK05610.1"/>
    <property type="match status" value="1"/>
</dbReference>
<dbReference type="NCBIfam" id="TIGR03635">
    <property type="entry name" value="uS17_bact"/>
    <property type="match status" value="1"/>
</dbReference>
<dbReference type="PANTHER" id="PTHR10744">
    <property type="entry name" value="40S RIBOSOMAL PROTEIN S11 FAMILY MEMBER"/>
    <property type="match status" value="1"/>
</dbReference>
<dbReference type="PANTHER" id="PTHR10744:SF1">
    <property type="entry name" value="SMALL RIBOSOMAL SUBUNIT PROTEIN US17M"/>
    <property type="match status" value="1"/>
</dbReference>
<dbReference type="Pfam" id="PF00366">
    <property type="entry name" value="Ribosomal_S17"/>
    <property type="match status" value="1"/>
</dbReference>
<dbReference type="PRINTS" id="PR00973">
    <property type="entry name" value="RIBOSOMALS17"/>
</dbReference>
<dbReference type="SUPFAM" id="SSF50249">
    <property type="entry name" value="Nucleic acid-binding proteins"/>
    <property type="match status" value="1"/>
</dbReference>
<dbReference type="PROSITE" id="PS00056">
    <property type="entry name" value="RIBOSOMAL_S17"/>
    <property type="match status" value="1"/>
</dbReference>
<comment type="function">
    <text evidence="1">One of the primary rRNA binding proteins, it binds specifically to the 5'-end of 16S ribosomal RNA.</text>
</comment>
<comment type="subunit">
    <text evidence="1">Part of the 30S ribosomal subunit.</text>
</comment>
<comment type="similarity">
    <text evidence="1">Belongs to the universal ribosomal protein uS17 family.</text>
</comment>
<sequence>MRNIKMPKRVLQGVVISSKTDKTVTVKVERKFKHPIYKKFVKVSKKYAAHDIENKYREGDKVSIVESRPISKTKTWVVVNVE</sequence>
<feature type="chain" id="PRO_0000233558" description="Small ribosomal subunit protein uS17">
    <location>
        <begin position="1"/>
        <end position="82"/>
    </location>
</feature>
<evidence type="ECO:0000255" key="1">
    <source>
        <dbReference type="HAMAP-Rule" id="MF_01345"/>
    </source>
</evidence>
<evidence type="ECO:0000305" key="2"/>
<organism>
    <name type="scientific">Rickettsia typhi (strain ATCC VR-144 / Wilmington)</name>
    <dbReference type="NCBI Taxonomy" id="257363"/>
    <lineage>
        <taxon>Bacteria</taxon>
        <taxon>Pseudomonadati</taxon>
        <taxon>Pseudomonadota</taxon>
        <taxon>Alphaproteobacteria</taxon>
        <taxon>Rickettsiales</taxon>
        <taxon>Rickettsiaceae</taxon>
        <taxon>Rickettsieae</taxon>
        <taxon>Rickettsia</taxon>
        <taxon>typhus group</taxon>
    </lineage>
</organism>
<protein>
    <recommendedName>
        <fullName evidence="1">Small ribosomal subunit protein uS17</fullName>
    </recommendedName>
    <alternativeName>
        <fullName evidence="2">30S ribosomal protein S17</fullName>
    </alternativeName>
</protein>
<name>RS17_RICTY</name>
<gene>
    <name evidence="1" type="primary">rpsQ</name>
    <name type="ordered locus">RT0642</name>
</gene>
<reference key="1">
    <citation type="journal article" date="2004" name="J. Bacteriol.">
        <title>Complete genome sequence of Rickettsia typhi and comparison with sequences of other Rickettsiae.</title>
        <authorList>
            <person name="McLeod M.P."/>
            <person name="Qin X."/>
            <person name="Karpathy S.E."/>
            <person name="Gioia J."/>
            <person name="Highlander S.K."/>
            <person name="Fox G.E."/>
            <person name="McNeill T.Z."/>
            <person name="Jiang H."/>
            <person name="Muzny D."/>
            <person name="Jacob L.S."/>
            <person name="Hawes A.C."/>
            <person name="Sodergren E."/>
            <person name="Gill R."/>
            <person name="Hume J."/>
            <person name="Morgan M."/>
            <person name="Fan G."/>
            <person name="Amin A.G."/>
            <person name="Gibbs R.A."/>
            <person name="Hong C."/>
            <person name="Yu X.-J."/>
            <person name="Walker D.H."/>
            <person name="Weinstock G.M."/>
        </authorList>
    </citation>
    <scope>NUCLEOTIDE SEQUENCE [LARGE SCALE GENOMIC DNA]</scope>
    <source>
        <strain>ATCC VR-144 / Wilmington</strain>
    </source>
</reference>
<proteinExistence type="inferred from homology"/>